<protein>
    <recommendedName>
        <fullName>Poly-beta-1,6-N-acetyl-D-glucosamine N-deacetylase</fullName>
        <shortName>PGA N-deacetylase</shortName>
        <shortName>Poly-beta-1,6-GlcNAc N-deacetylase</shortName>
        <ecNumber>3.5.1.-</ecNumber>
    </recommendedName>
</protein>
<proteinExistence type="evidence at protein level"/>
<feature type="signal peptide" evidence="1">
    <location>
        <begin position="1"/>
        <end position="20"/>
    </location>
</feature>
<feature type="chain" id="PRO_0000024844" description="Poly-beta-1,6-N-acetyl-D-glucosamine N-deacetylase">
    <location>
        <begin position="21"/>
        <end position="672"/>
    </location>
</feature>
<feature type="domain" description="NodB homology" evidence="2">
    <location>
        <begin position="107"/>
        <end position="349"/>
    </location>
</feature>
<feature type="lipid moiety-binding region" description="N-palmitoyl cysteine" evidence="1">
    <location>
        <position position="21"/>
    </location>
</feature>
<feature type="lipid moiety-binding region" description="S-diacylglycerol cysteine" evidence="1">
    <location>
        <position position="21"/>
    </location>
</feature>
<feature type="mutagenesis site" description="High decrease in catalytic activity. Unable to support biofilm formation and PGA secretion." evidence="4">
    <original>D</original>
    <variation>A</variation>
    <location>
        <position position="115"/>
    </location>
</feature>
<feature type="mutagenesis site" description="Unable to support biofilm formation and PGA secretion." evidence="4">
    <original>H</original>
    <variation>A</variation>
    <location>
        <position position="184"/>
    </location>
</feature>
<feature type="strand" evidence="7">
    <location>
        <begin position="48"/>
        <end position="54"/>
    </location>
</feature>
<feature type="strand" evidence="7">
    <location>
        <begin position="57"/>
        <end position="60"/>
    </location>
</feature>
<feature type="helix" evidence="7">
    <location>
        <begin position="64"/>
        <end position="66"/>
    </location>
</feature>
<feature type="strand" evidence="8">
    <location>
        <begin position="68"/>
        <end position="70"/>
    </location>
</feature>
<feature type="helix" evidence="7">
    <location>
        <begin position="71"/>
        <end position="83"/>
    </location>
</feature>
<feature type="helix" evidence="7">
    <location>
        <begin position="91"/>
        <end position="98"/>
    </location>
</feature>
<feature type="strand" evidence="7">
    <location>
        <begin position="108"/>
        <end position="115"/>
    </location>
</feature>
<feature type="helix" evidence="7">
    <location>
        <begin position="118"/>
        <end position="131"/>
    </location>
</feature>
<feature type="strand" evidence="7">
    <location>
        <begin position="135"/>
        <end position="139"/>
    </location>
</feature>
<feature type="helix" evidence="7">
    <location>
        <begin position="141"/>
        <end position="144"/>
    </location>
</feature>
<feature type="strand" evidence="7">
    <location>
        <begin position="148"/>
        <end position="150"/>
    </location>
</feature>
<feature type="strand" evidence="7">
    <location>
        <begin position="152"/>
        <end position="154"/>
    </location>
</feature>
<feature type="strand" evidence="7">
    <location>
        <begin position="157"/>
        <end position="159"/>
    </location>
</feature>
<feature type="helix" evidence="7">
    <location>
        <begin position="161"/>
        <end position="163"/>
    </location>
</feature>
<feature type="helix" evidence="7">
    <location>
        <begin position="167"/>
        <end position="175"/>
    </location>
</feature>
<feature type="strand" evidence="7">
    <location>
        <begin position="178"/>
        <end position="181"/>
    </location>
</feature>
<feature type="strand" evidence="8">
    <location>
        <begin position="190"/>
        <end position="193"/>
    </location>
</feature>
<feature type="strand" evidence="8">
    <location>
        <begin position="200"/>
        <end position="202"/>
    </location>
</feature>
<feature type="helix" evidence="7">
    <location>
        <begin position="203"/>
        <end position="205"/>
    </location>
</feature>
<feature type="turn" evidence="7">
    <location>
        <begin position="211"/>
        <end position="214"/>
    </location>
</feature>
<feature type="helix" evidence="7">
    <location>
        <begin position="219"/>
        <end position="240"/>
    </location>
</feature>
<feature type="strand" evidence="7">
    <location>
        <begin position="247"/>
        <end position="249"/>
    </location>
</feature>
<feature type="helix" evidence="7">
    <location>
        <begin position="251"/>
        <end position="253"/>
    </location>
</feature>
<feature type="helix" evidence="7">
    <location>
        <begin position="257"/>
        <end position="265"/>
    </location>
</feature>
<feature type="strand" evidence="7">
    <location>
        <begin position="270"/>
        <end position="272"/>
    </location>
</feature>
<feature type="strand" evidence="7">
    <location>
        <begin position="285"/>
        <end position="287"/>
    </location>
</feature>
<feature type="helix" evidence="7">
    <location>
        <begin position="298"/>
        <end position="306"/>
    </location>
</feature>
<feature type="turn" evidence="8">
    <location>
        <begin position="307"/>
        <end position="309"/>
    </location>
</feature>
<feature type="strand" evidence="10">
    <location>
        <begin position="315"/>
        <end position="319"/>
    </location>
</feature>
<feature type="helix" evidence="10">
    <location>
        <begin position="321"/>
        <end position="323"/>
    </location>
</feature>
<feature type="helix" evidence="10">
    <location>
        <begin position="329"/>
        <end position="346"/>
    </location>
</feature>
<feature type="strand" evidence="10">
    <location>
        <begin position="349"/>
        <end position="354"/>
    </location>
</feature>
<feature type="strand" evidence="10">
    <location>
        <begin position="368"/>
        <end position="370"/>
    </location>
</feature>
<feature type="strand" evidence="10">
    <location>
        <begin position="373"/>
        <end position="375"/>
    </location>
</feature>
<feature type="helix" evidence="10">
    <location>
        <begin position="382"/>
        <end position="392"/>
    </location>
</feature>
<feature type="strand" evidence="10">
    <location>
        <begin position="396"/>
        <end position="401"/>
    </location>
</feature>
<feature type="helix" evidence="8">
    <location>
        <begin position="419"/>
        <end position="421"/>
    </location>
</feature>
<feature type="helix" evidence="8">
    <location>
        <begin position="422"/>
        <end position="426"/>
    </location>
</feature>
<feature type="helix" evidence="8">
    <location>
        <begin position="429"/>
        <end position="433"/>
    </location>
</feature>
<feature type="helix" evidence="10">
    <location>
        <begin position="440"/>
        <end position="454"/>
    </location>
</feature>
<feature type="strand" evidence="10">
    <location>
        <begin position="460"/>
        <end position="464"/>
    </location>
</feature>
<feature type="helix" evidence="10">
    <location>
        <begin position="478"/>
        <end position="487"/>
    </location>
</feature>
<feature type="helix" evidence="10">
    <location>
        <begin position="493"/>
        <end position="497"/>
    </location>
</feature>
<feature type="helix" evidence="10">
    <location>
        <begin position="500"/>
        <end position="529"/>
    </location>
</feature>
<feature type="strand" evidence="10">
    <location>
        <begin position="534"/>
        <end position="539"/>
    </location>
</feature>
<feature type="helix" evidence="10">
    <location>
        <begin position="541"/>
        <end position="545"/>
    </location>
</feature>
<feature type="helix" evidence="10">
    <location>
        <begin position="547"/>
        <end position="552"/>
    </location>
</feature>
<feature type="helix" evidence="10">
    <location>
        <begin position="557"/>
        <end position="563"/>
    </location>
</feature>
<feature type="strand" evidence="10">
    <location>
        <begin position="565"/>
        <end position="570"/>
    </location>
</feature>
<feature type="turn" evidence="10">
    <location>
        <begin position="573"/>
        <end position="577"/>
    </location>
</feature>
<feature type="helix" evidence="10">
    <location>
        <begin position="580"/>
        <end position="582"/>
    </location>
</feature>
<feature type="helix" evidence="10">
    <location>
        <begin position="583"/>
        <end position="595"/>
    </location>
</feature>
<feature type="helix" evidence="10">
    <location>
        <begin position="600"/>
        <end position="603"/>
    </location>
</feature>
<feature type="strand" evidence="10">
    <location>
        <begin position="604"/>
        <end position="612"/>
    </location>
</feature>
<feature type="strand" evidence="11">
    <location>
        <begin position="615"/>
        <end position="617"/>
    </location>
</feature>
<feature type="strand" evidence="9">
    <location>
        <begin position="619"/>
        <end position="621"/>
    </location>
</feature>
<feature type="helix" evidence="10">
    <location>
        <begin position="624"/>
        <end position="636"/>
    </location>
</feature>
<feature type="strand" evidence="10">
    <location>
        <begin position="642"/>
        <end position="645"/>
    </location>
</feature>
<feature type="helix" evidence="10">
    <location>
        <begin position="649"/>
        <end position="651"/>
    </location>
</feature>
<feature type="helix" evidence="10">
    <location>
        <begin position="656"/>
        <end position="659"/>
    </location>
</feature>
<feature type="helix" evidence="10">
    <location>
        <begin position="660"/>
        <end position="662"/>
    </location>
</feature>
<dbReference type="EC" id="3.5.1.-"/>
<dbReference type="EMBL" id="U00096">
    <property type="protein sequence ID" value="AAC74108.1"/>
    <property type="molecule type" value="Genomic_DNA"/>
</dbReference>
<dbReference type="EMBL" id="AP009048">
    <property type="protein sequence ID" value="BAA35805.2"/>
    <property type="molecule type" value="Genomic_DNA"/>
</dbReference>
<dbReference type="PIR" id="E64844">
    <property type="entry name" value="E64844"/>
</dbReference>
<dbReference type="RefSeq" id="NP_415542.1">
    <property type="nucleotide sequence ID" value="NC_000913.3"/>
</dbReference>
<dbReference type="RefSeq" id="WP_000945561.1">
    <property type="nucleotide sequence ID" value="NZ_STEB01000006.1"/>
</dbReference>
<dbReference type="PDB" id="3VUS">
    <property type="method" value="X-ray"/>
    <property type="resolution" value="1.65 A"/>
    <property type="chains" value="A/B=42-309"/>
</dbReference>
<dbReference type="PDB" id="4F9D">
    <property type="method" value="X-ray"/>
    <property type="resolution" value="1.90 A"/>
    <property type="chains" value="A/B=42-655"/>
</dbReference>
<dbReference type="PDB" id="4F9J">
    <property type="method" value="X-ray"/>
    <property type="resolution" value="2.10 A"/>
    <property type="chains" value="A/B=42-655"/>
</dbReference>
<dbReference type="PDB" id="4P7L">
    <property type="method" value="X-ray"/>
    <property type="resolution" value="1.80 A"/>
    <property type="chains" value="A=310-672"/>
</dbReference>
<dbReference type="PDB" id="4P7N">
    <property type="method" value="X-ray"/>
    <property type="resolution" value="1.89 A"/>
    <property type="chains" value="A=310-672"/>
</dbReference>
<dbReference type="PDB" id="4P7O">
    <property type="method" value="X-ray"/>
    <property type="resolution" value="1.48 A"/>
    <property type="chains" value="A/B=310-672"/>
</dbReference>
<dbReference type="PDB" id="4P7Q">
    <property type="method" value="X-ray"/>
    <property type="resolution" value="1.65 A"/>
    <property type="chains" value="A=310-672"/>
</dbReference>
<dbReference type="PDB" id="4P7R">
    <property type="method" value="X-ray"/>
    <property type="resolution" value="1.80 A"/>
    <property type="chains" value="A=310-672"/>
</dbReference>
<dbReference type="PDBsum" id="3VUS"/>
<dbReference type="PDBsum" id="4F9D"/>
<dbReference type="PDBsum" id="4F9J"/>
<dbReference type="PDBsum" id="4P7L"/>
<dbReference type="PDBsum" id="4P7N"/>
<dbReference type="PDBsum" id="4P7O"/>
<dbReference type="PDBsum" id="4P7Q"/>
<dbReference type="PDBsum" id="4P7R"/>
<dbReference type="SMR" id="P75906"/>
<dbReference type="BioGRID" id="4260050">
    <property type="interactions" value="27"/>
</dbReference>
<dbReference type="DIP" id="DIP-11513N"/>
<dbReference type="FunCoup" id="P75906">
    <property type="interactions" value="19"/>
</dbReference>
<dbReference type="STRING" id="511145.b1023"/>
<dbReference type="BindingDB" id="P75906"/>
<dbReference type="ChEMBL" id="CHEMBL4295582"/>
<dbReference type="PaxDb" id="511145-b1023"/>
<dbReference type="EnsemblBacteria" id="AAC74108">
    <property type="protein sequence ID" value="AAC74108"/>
    <property type="gene ID" value="b1023"/>
</dbReference>
<dbReference type="GeneID" id="945604"/>
<dbReference type="KEGG" id="ecj:JW5142"/>
<dbReference type="KEGG" id="eco:b1023"/>
<dbReference type="KEGG" id="ecoc:C3026_06220"/>
<dbReference type="PATRIC" id="fig|1411691.4.peg.1246"/>
<dbReference type="EchoBASE" id="EB3624"/>
<dbReference type="eggNOG" id="COG0726">
    <property type="taxonomic scope" value="Bacteria"/>
</dbReference>
<dbReference type="eggNOG" id="COG1649">
    <property type="taxonomic scope" value="Bacteria"/>
</dbReference>
<dbReference type="HOGENOM" id="CLU_030024_9_2_6"/>
<dbReference type="InParanoid" id="P75906"/>
<dbReference type="OMA" id="KVYAWMP"/>
<dbReference type="OrthoDB" id="9814639at2"/>
<dbReference type="BioCyc" id="EcoCyc:G6530-MONOMER"/>
<dbReference type="BioCyc" id="MetaCyc:G6530-MONOMER"/>
<dbReference type="BRENDA" id="3.1.1.58">
    <property type="organism ID" value="2026"/>
</dbReference>
<dbReference type="EvolutionaryTrace" id="P75906"/>
<dbReference type="PRO" id="PR:P75906"/>
<dbReference type="Proteomes" id="UP000000625">
    <property type="component" value="Chromosome"/>
</dbReference>
<dbReference type="GO" id="GO:0009279">
    <property type="term" value="C:cell outer membrane"/>
    <property type="evidence" value="ECO:0007669"/>
    <property type="project" value="UniProtKB-SubCell"/>
</dbReference>
<dbReference type="GO" id="GO:0016787">
    <property type="term" value="F:hydrolase activity"/>
    <property type="evidence" value="ECO:0000318"/>
    <property type="project" value="GO_Central"/>
</dbReference>
<dbReference type="GO" id="GO:0016810">
    <property type="term" value="F:hydrolase activity, acting on carbon-nitrogen (but not peptide) bonds"/>
    <property type="evidence" value="ECO:0000314"/>
    <property type="project" value="EcoCyc"/>
</dbReference>
<dbReference type="GO" id="GO:0004553">
    <property type="term" value="F:hydrolase activity, hydrolyzing O-glycosyl compounds"/>
    <property type="evidence" value="ECO:0000314"/>
    <property type="project" value="EcoCyc"/>
</dbReference>
<dbReference type="GO" id="GO:0005975">
    <property type="term" value="P:carbohydrate metabolic process"/>
    <property type="evidence" value="ECO:0007669"/>
    <property type="project" value="InterPro"/>
</dbReference>
<dbReference type="GO" id="GO:0043708">
    <property type="term" value="P:cell adhesion involved in biofilm formation"/>
    <property type="evidence" value="ECO:0007669"/>
    <property type="project" value="InterPro"/>
</dbReference>
<dbReference type="GO" id="GO:0098732">
    <property type="term" value="P:macromolecule deacylation"/>
    <property type="evidence" value="ECO:0000314"/>
    <property type="project" value="EcoCyc"/>
</dbReference>
<dbReference type="GO" id="GO:0044010">
    <property type="term" value="P:single-species biofilm formation"/>
    <property type="evidence" value="ECO:0000315"/>
    <property type="project" value="EcoCyc"/>
</dbReference>
<dbReference type="CDD" id="cd10964">
    <property type="entry name" value="CE4_PgaB_5s"/>
    <property type="match status" value="1"/>
</dbReference>
<dbReference type="FunFam" id="3.20.20.370:FF:000007">
    <property type="entry name" value="Poly-beta-1,6-N-acetyl-D-glucosamine N-deacetylase PgaB"/>
    <property type="match status" value="1"/>
</dbReference>
<dbReference type="FunFam" id="3.20.20.80:FF:000085">
    <property type="entry name" value="Poly-beta-1,6-N-acetyl-D-glucosamine N-deacetylase PgaB"/>
    <property type="match status" value="1"/>
</dbReference>
<dbReference type="Gene3D" id="3.20.20.80">
    <property type="entry name" value="Glycosidases"/>
    <property type="match status" value="1"/>
</dbReference>
<dbReference type="Gene3D" id="3.20.20.370">
    <property type="entry name" value="Glycoside hydrolase/deacetylase"/>
    <property type="match status" value="1"/>
</dbReference>
<dbReference type="InterPro" id="IPR011330">
    <property type="entry name" value="Glyco_hydro/deAcase_b/a-brl"/>
</dbReference>
<dbReference type="InterPro" id="IPR002509">
    <property type="entry name" value="NODB_dom"/>
</dbReference>
<dbReference type="InterPro" id="IPR023854">
    <property type="entry name" value="PGA_deacetylase_PgaB"/>
</dbReference>
<dbReference type="InterPro" id="IPR032772">
    <property type="entry name" value="PGA_deacetylase_PgaB_C"/>
</dbReference>
<dbReference type="InterPro" id="IPR051398">
    <property type="entry name" value="Polysacch_Deacetylase"/>
</dbReference>
<dbReference type="NCBIfam" id="TIGR03938">
    <property type="entry name" value="deacetyl_PgaB"/>
    <property type="match status" value="1"/>
</dbReference>
<dbReference type="NCBIfam" id="NF011177">
    <property type="entry name" value="PRK14582.1"/>
    <property type="match status" value="1"/>
</dbReference>
<dbReference type="PANTHER" id="PTHR34216">
    <property type="match status" value="1"/>
</dbReference>
<dbReference type="PANTHER" id="PTHR34216:SF7">
    <property type="entry name" value="POLY-BETA-1,6-N-ACETYL-D-GLUCOSAMINE N-DEACETYLASE"/>
    <property type="match status" value="1"/>
</dbReference>
<dbReference type="Pfam" id="PF14883">
    <property type="entry name" value="GHL13"/>
    <property type="match status" value="1"/>
</dbReference>
<dbReference type="Pfam" id="PF01522">
    <property type="entry name" value="Polysacc_deac_1"/>
    <property type="match status" value="1"/>
</dbReference>
<dbReference type="SUPFAM" id="SSF88713">
    <property type="entry name" value="Glycoside hydrolase/deacetylase"/>
    <property type="match status" value="1"/>
</dbReference>
<dbReference type="PROSITE" id="PS51677">
    <property type="entry name" value="NODB"/>
    <property type="match status" value="1"/>
</dbReference>
<dbReference type="PROSITE" id="PS51257">
    <property type="entry name" value="PROKAR_LIPOPROTEIN"/>
    <property type="match status" value="1"/>
</dbReference>
<sequence length="672" mass="77413">MLRNGNKYLLMLVSIIMLTACISQSRTSFIPPQDRESLLAEQPWPHNGFVAISWHNVEDEAADQRFMSVRTSALREQFAWLRENGYQPVSIAQIREAHRGGKPLPEKAVVLTFDDGYQSFYTRVFPILQAFQWPAVWAPVGSWVDTPADKQVKFGDELVDREYFATWQQVREVARSRLVELASHTWNSHYGIQANATGSLLPVYVNRAYFTDHARYETAAEYRERIRLDAVKMTEYLRTKVEVNPHVFVWPYGEANGIAIEELKKLGYDMFFTLESGLANASQLDSIPRVLIANNPSLKEFAQQIITVQEKSPQRIMHIDLDYVYDENLQQMDRNIDVLIQRVKDMQISTVYLQAFADPDGDGLVKEVWFPNRLLPMKADIFSRVAWQLRTRSGVNIYAWMPVLSWDLDPTLTRVKYLPTGEKKAQIHPEQYHRLSPFDDRVRAQVGMLYEDLAGHAAFDGILFHDDALLSDYEDASAPAITAYQQAGFSGSLSEIRQNPEQFKQWARFKSRALTDFTLELSARVKAIRGPHIKTARNIFALPVIQPESEAWFAQNYADFLKSYDWTAIMAMPYLEGVAEKSADQWLIQLTNQIKNIPQAKDKSILELQAQNWQKNGQHQAISSQQLAHWMSLLQLNGVKNYGYYPDNFLHNQPEIDLIRPEFSTAWYPKND</sequence>
<name>PGAB_ECOLI</name>
<gene>
    <name type="primary">pgaB</name>
    <name type="synonym">ycdR</name>
    <name type="ordered locus">b1023</name>
    <name type="ordered locus">JW5142</name>
</gene>
<reference key="1">
    <citation type="journal article" date="1996" name="DNA Res.">
        <title>A 718-kb DNA sequence of the Escherichia coli K-12 genome corresponding to the 12.7-28.0 min region on the linkage map.</title>
        <authorList>
            <person name="Oshima T."/>
            <person name="Aiba H."/>
            <person name="Baba T."/>
            <person name="Fujita K."/>
            <person name="Hayashi K."/>
            <person name="Honjo A."/>
            <person name="Ikemoto K."/>
            <person name="Inada T."/>
            <person name="Itoh T."/>
            <person name="Kajihara M."/>
            <person name="Kanai K."/>
            <person name="Kashimoto K."/>
            <person name="Kimura S."/>
            <person name="Kitagawa M."/>
            <person name="Makino K."/>
            <person name="Masuda S."/>
            <person name="Miki T."/>
            <person name="Mizobuchi K."/>
            <person name="Mori H."/>
            <person name="Motomura K."/>
            <person name="Nakamura Y."/>
            <person name="Nashimoto H."/>
            <person name="Nishio Y."/>
            <person name="Saito N."/>
            <person name="Sampei G."/>
            <person name="Seki Y."/>
            <person name="Tagami H."/>
            <person name="Takemoto K."/>
            <person name="Wada C."/>
            <person name="Yamamoto Y."/>
            <person name="Yano M."/>
            <person name="Horiuchi T."/>
        </authorList>
    </citation>
    <scope>NUCLEOTIDE SEQUENCE [LARGE SCALE GENOMIC DNA]</scope>
    <source>
        <strain>K12 / W3110 / ATCC 27325 / DSM 5911</strain>
    </source>
</reference>
<reference key="2">
    <citation type="journal article" date="1997" name="Science">
        <title>The complete genome sequence of Escherichia coli K-12.</title>
        <authorList>
            <person name="Blattner F.R."/>
            <person name="Plunkett G. III"/>
            <person name="Bloch C.A."/>
            <person name="Perna N.T."/>
            <person name="Burland V."/>
            <person name="Riley M."/>
            <person name="Collado-Vides J."/>
            <person name="Glasner J.D."/>
            <person name="Rode C.K."/>
            <person name="Mayhew G.F."/>
            <person name="Gregor J."/>
            <person name="Davis N.W."/>
            <person name="Kirkpatrick H.A."/>
            <person name="Goeden M.A."/>
            <person name="Rose D.J."/>
            <person name="Mau B."/>
            <person name="Shao Y."/>
        </authorList>
    </citation>
    <scope>NUCLEOTIDE SEQUENCE [LARGE SCALE GENOMIC DNA]</scope>
    <source>
        <strain>K12 / MG1655 / ATCC 47076</strain>
    </source>
</reference>
<reference key="3">
    <citation type="journal article" date="2006" name="Mol. Syst. Biol.">
        <title>Highly accurate genome sequences of Escherichia coli K-12 strains MG1655 and W3110.</title>
        <authorList>
            <person name="Hayashi K."/>
            <person name="Morooka N."/>
            <person name="Yamamoto Y."/>
            <person name="Fujita K."/>
            <person name="Isono K."/>
            <person name="Choi S."/>
            <person name="Ohtsubo E."/>
            <person name="Baba T."/>
            <person name="Wanner B.L."/>
            <person name="Mori H."/>
            <person name="Horiuchi T."/>
        </authorList>
    </citation>
    <scope>NUCLEOTIDE SEQUENCE [LARGE SCALE GENOMIC DNA]</scope>
    <scope>SEQUENCE REVISION</scope>
    <source>
        <strain>K12 / W3110 / ATCC 27325 / DSM 5911</strain>
    </source>
</reference>
<reference key="4">
    <citation type="journal article" date="2004" name="J. Bacteriol.">
        <title>The pgaABCD locus of Escherichia coli promotes the synthesis of a polysaccharide adhesin required for biofilm formation.</title>
        <authorList>
            <person name="Wang X."/>
            <person name="Preston J.F. III"/>
            <person name="Romeo T."/>
        </authorList>
    </citation>
    <scope>ROLE IN THE SYNTHESIS OF A BIOFILM POLYSACCHARIDE</scope>
    <scope>OPERON STRUCTURE</scope>
    <scope>DISRUPTION PHENOTYPE</scope>
    <source>
        <strain>K12 / MG1655 / ATCC 47076</strain>
    </source>
</reference>
<reference key="5">
    <citation type="journal article" date="2008" name="J. Bacteriol.">
        <title>Roles of pgaABCD genes in synthesis, modification, and export of the Escherichia coli biofilm adhesin poly-beta-1,6-N-acetyl-D-glucosamine.</title>
        <authorList>
            <person name="Itoh Y."/>
            <person name="Rice J.D."/>
            <person name="Goller C."/>
            <person name="Pannuri A."/>
            <person name="Taylor J."/>
            <person name="Meisner J."/>
            <person name="Beveridge T.J."/>
            <person name="Preston J.F. III"/>
            <person name="Romeo T."/>
        </authorList>
    </citation>
    <scope>FUNCTION AS A PGA DEACETYLASE</scope>
    <scope>MUTAGENESIS OF ASP-115 AND HIS-184</scope>
    <scope>DOMAIN</scope>
    <scope>SUBCELLULAR LOCATION</scope>
    <scope>DISRUPTION PHENOTYPE</scope>
    <source>
        <strain>K12 / MG1655 / ATCC 47076</strain>
    </source>
</reference>
<evidence type="ECO:0000255" key="1">
    <source>
        <dbReference type="PROSITE-ProRule" id="PRU00303"/>
    </source>
</evidence>
<evidence type="ECO:0000255" key="2">
    <source>
        <dbReference type="PROSITE-ProRule" id="PRU01014"/>
    </source>
</evidence>
<evidence type="ECO:0000269" key="3">
    <source>
    </source>
</evidence>
<evidence type="ECO:0000269" key="4">
    <source>
    </source>
</evidence>
<evidence type="ECO:0000305" key="5"/>
<evidence type="ECO:0000305" key="6">
    <source>
    </source>
</evidence>
<evidence type="ECO:0007829" key="7">
    <source>
        <dbReference type="PDB" id="3VUS"/>
    </source>
</evidence>
<evidence type="ECO:0007829" key="8">
    <source>
        <dbReference type="PDB" id="4F9D"/>
    </source>
</evidence>
<evidence type="ECO:0007829" key="9">
    <source>
        <dbReference type="PDB" id="4P7L"/>
    </source>
</evidence>
<evidence type="ECO:0007829" key="10">
    <source>
        <dbReference type="PDB" id="4P7O"/>
    </source>
</evidence>
<evidence type="ECO:0007829" key="11">
    <source>
        <dbReference type="PDB" id="4P7R"/>
    </source>
</evidence>
<keyword id="KW-0002">3D-structure</keyword>
<keyword id="KW-0998">Cell outer membrane</keyword>
<keyword id="KW-0378">Hydrolase</keyword>
<keyword id="KW-0449">Lipoprotein</keyword>
<keyword id="KW-0472">Membrane</keyword>
<keyword id="KW-0564">Palmitate</keyword>
<keyword id="KW-1185">Reference proteome</keyword>
<keyword id="KW-0732">Signal</keyword>
<accession>P75906</accession>
<accession>Q9R7P5</accession>
<accession>Q9R7P7</accession>
<accession>Q9R7P8</accession>
<comment type="function">
    <text evidence="3 4">Catalyzes the N-deacetylation of poly-beta-1,6-N-acetyl-D-glucosamine (PGA), a biofilm adhesin polysaccharide. N-deacetylation promotes PGA export through the PgaA porin.</text>
</comment>
<comment type="subcellular location">
    <subcellularLocation>
        <location evidence="6">Cell outer membrane</location>
        <topology evidence="6">Lipid-anchor</topology>
        <orientation evidence="6">Periplasmic side</orientation>
    </subcellularLocation>
</comment>
<comment type="domain">
    <text evidence="4">Contains a N-terminal polysaccharide deacetylase domain, and a C-terminal domain required for PGA N-deacetylation that may be involved in binding to unmodified poly-beta-1,6-GlcNAc and thereby assists catalysis by the deacetylase domain.</text>
</comment>
<comment type="disruption phenotype">
    <text evidence="3 4">Deletion of pgaB does not prevent PGA synthesis but does block its export and biofilm formation. The synthesized PGA is retained in the periplasm and accumulates at the cell poles.</text>
</comment>
<comment type="similarity">
    <text evidence="5">Belongs to the polysaccharide deacetylase family.</text>
</comment>
<organism>
    <name type="scientific">Escherichia coli (strain K12)</name>
    <dbReference type="NCBI Taxonomy" id="83333"/>
    <lineage>
        <taxon>Bacteria</taxon>
        <taxon>Pseudomonadati</taxon>
        <taxon>Pseudomonadota</taxon>
        <taxon>Gammaproteobacteria</taxon>
        <taxon>Enterobacterales</taxon>
        <taxon>Enterobacteriaceae</taxon>
        <taxon>Escherichia</taxon>
    </lineage>
</organism>